<feature type="chain" id="PRO_0000267035" description="Enolase">
    <location>
        <begin position="1"/>
        <end position="456"/>
    </location>
</feature>
<feature type="active site" description="Proton donor" evidence="1">
    <location>
        <position position="207"/>
    </location>
</feature>
<feature type="active site" description="Proton acceptor" evidence="1">
    <location>
        <position position="339"/>
    </location>
</feature>
<feature type="binding site" evidence="1">
    <location>
        <position position="164"/>
    </location>
    <ligand>
        <name>(2R)-2-phosphoglycerate</name>
        <dbReference type="ChEBI" id="CHEBI:58289"/>
    </ligand>
</feature>
<feature type="binding site" evidence="1">
    <location>
        <position position="244"/>
    </location>
    <ligand>
        <name>Mg(2+)</name>
        <dbReference type="ChEBI" id="CHEBI:18420"/>
    </ligand>
</feature>
<feature type="binding site" evidence="1">
    <location>
        <position position="287"/>
    </location>
    <ligand>
        <name>Mg(2+)</name>
        <dbReference type="ChEBI" id="CHEBI:18420"/>
    </ligand>
</feature>
<feature type="binding site" evidence="1">
    <location>
        <position position="314"/>
    </location>
    <ligand>
        <name>Mg(2+)</name>
        <dbReference type="ChEBI" id="CHEBI:18420"/>
    </ligand>
</feature>
<feature type="binding site" evidence="1">
    <location>
        <position position="339"/>
    </location>
    <ligand>
        <name>(2R)-2-phosphoglycerate</name>
        <dbReference type="ChEBI" id="CHEBI:58289"/>
    </ligand>
</feature>
<feature type="binding site" evidence="1">
    <location>
        <position position="368"/>
    </location>
    <ligand>
        <name>(2R)-2-phosphoglycerate</name>
        <dbReference type="ChEBI" id="CHEBI:58289"/>
    </ligand>
</feature>
<feature type="binding site" evidence="1">
    <location>
        <position position="369"/>
    </location>
    <ligand>
        <name>(2R)-2-phosphoglycerate</name>
        <dbReference type="ChEBI" id="CHEBI:58289"/>
    </ligand>
</feature>
<feature type="binding site" evidence="1">
    <location>
        <position position="390"/>
    </location>
    <ligand>
        <name>(2R)-2-phosphoglycerate</name>
        <dbReference type="ChEBI" id="CHEBI:58289"/>
    </ligand>
</feature>
<keyword id="KW-0963">Cytoplasm</keyword>
<keyword id="KW-0324">Glycolysis</keyword>
<keyword id="KW-0456">Lyase</keyword>
<keyword id="KW-0460">Magnesium</keyword>
<keyword id="KW-0479">Metal-binding</keyword>
<keyword id="KW-1185">Reference proteome</keyword>
<keyword id="KW-0964">Secreted</keyword>
<dbReference type="EC" id="4.2.1.11" evidence="1"/>
<dbReference type="EMBL" id="AM233362">
    <property type="protein sequence ID" value="CAJ79966.1"/>
    <property type="molecule type" value="Genomic_DNA"/>
</dbReference>
<dbReference type="RefSeq" id="WP_003016861.1">
    <property type="nucleotide sequence ID" value="NZ_CP009694.1"/>
</dbReference>
<dbReference type="SMR" id="Q2A278"/>
<dbReference type="KEGG" id="ftl:FTL_1527"/>
<dbReference type="UniPathway" id="UPA00109">
    <property type="reaction ID" value="UER00187"/>
</dbReference>
<dbReference type="Proteomes" id="UP000001944">
    <property type="component" value="Chromosome"/>
</dbReference>
<dbReference type="GO" id="GO:0009986">
    <property type="term" value="C:cell surface"/>
    <property type="evidence" value="ECO:0007669"/>
    <property type="project" value="UniProtKB-SubCell"/>
</dbReference>
<dbReference type="GO" id="GO:0005576">
    <property type="term" value="C:extracellular region"/>
    <property type="evidence" value="ECO:0007669"/>
    <property type="project" value="UniProtKB-SubCell"/>
</dbReference>
<dbReference type="GO" id="GO:0000015">
    <property type="term" value="C:phosphopyruvate hydratase complex"/>
    <property type="evidence" value="ECO:0007669"/>
    <property type="project" value="InterPro"/>
</dbReference>
<dbReference type="GO" id="GO:0000287">
    <property type="term" value="F:magnesium ion binding"/>
    <property type="evidence" value="ECO:0007669"/>
    <property type="project" value="UniProtKB-UniRule"/>
</dbReference>
<dbReference type="GO" id="GO:0004634">
    <property type="term" value="F:phosphopyruvate hydratase activity"/>
    <property type="evidence" value="ECO:0007669"/>
    <property type="project" value="UniProtKB-UniRule"/>
</dbReference>
<dbReference type="GO" id="GO:0006096">
    <property type="term" value="P:glycolytic process"/>
    <property type="evidence" value="ECO:0007669"/>
    <property type="project" value="UniProtKB-UniRule"/>
</dbReference>
<dbReference type="CDD" id="cd03313">
    <property type="entry name" value="enolase"/>
    <property type="match status" value="1"/>
</dbReference>
<dbReference type="FunFam" id="3.20.20.120:FF:000001">
    <property type="entry name" value="Enolase"/>
    <property type="match status" value="1"/>
</dbReference>
<dbReference type="FunFam" id="3.30.390.10:FF:000001">
    <property type="entry name" value="Enolase"/>
    <property type="match status" value="1"/>
</dbReference>
<dbReference type="Gene3D" id="3.20.20.120">
    <property type="entry name" value="Enolase-like C-terminal domain"/>
    <property type="match status" value="1"/>
</dbReference>
<dbReference type="Gene3D" id="3.30.390.10">
    <property type="entry name" value="Enolase-like, N-terminal domain"/>
    <property type="match status" value="1"/>
</dbReference>
<dbReference type="HAMAP" id="MF_00318">
    <property type="entry name" value="Enolase"/>
    <property type="match status" value="1"/>
</dbReference>
<dbReference type="InterPro" id="IPR000941">
    <property type="entry name" value="Enolase"/>
</dbReference>
<dbReference type="InterPro" id="IPR036849">
    <property type="entry name" value="Enolase-like_C_sf"/>
</dbReference>
<dbReference type="InterPro" id="IPR029017">
    <property type="entry name" value="Enolase-like_N"/>
</dbReference>
<dbReference type="InterPro" id="IPR020810">
    <property type="entry name" value="Enolase_C"/>
</dbReference>
<dbReference type="InterPro" id="IPR020809">
    <property type="entry name" value="Enolase_CS"/>
</dbReference>
<dbReference type="InterPro" id="IPR020811">
    <property type="entry name" value="Enolase_N"/>
</dbReference>
<dbReference type="NCBIfam" id="TIGR01060">
    <property type="entry name" value="eno"/>
    <property type="match status" value="1"/>
</dbReference>
<dbReference type="PANTHER" id="PTHR11902">
    <property type="entry name" value="ENOLASE"/>
    <property type="match status" value="1"/>
</dbReference>
<dbReference type="PANTHER" id="PTHR11902:SF1">
    <property type="entry name" value="ENOLASE"/>
    <property type="match status" value="1"/>
</dbReference>
<dbReference type="Pfam" id="PF00113">
    <property type="entry name" value="Enolase_C"/>
    <property type="match status" value="1"/>
</dbReference>
<dbReference type="Pfam" id="PF03952">
    <property type="entry name" value="Enolase_N"/>
    <property type="match status" value="1"/>
</dbReference>
<dbReference type="PIRSF" id="PIRSF001400">
    <property type="entry name" value="Enolase"/>
    <property type="match status" value="1"/>
</dbReference>
<dbReference type="PRINTS" id="PR00148">
    <property type="entry name" value="ENOLASE"/>
</dbReference>
<dbReference type="SFLD" id="SFLDS00001">
    <property type="entry name" value="Enolase"/>
    <property type="match status" value="1"/>
</dbReference>
<dbReference type="SFLD" id="SFLDF00002">
    <property type="entry name" value="enolase"/>
    <property type="match status" value="1"/>
</dbReference>
<dbReference type="SMART" id="SM01192">
    <property type="entry name" value="Enolase_C"/>
    <property type="match status" value="1"/>
</dbReference>
<dbReference type="SMART" id="SM01193">
    <property type="entry name" value="Enolase_N"/>
    <property type="match status" value="1"/>
</dbReference>
<dbReference type="SUPFAM" id="SSF51604">
    <property type="entry name" value="Enolase C-terminal domain-like"/>
    <property type="match status" value="1"/>
</dbReference>
<dbReference type="SUPFAM" id="SSF54826">
    <property type="entry name" value="Enolase N-terminal domain-like"/>
    <property type="match status" value="1"/>
</dbReference>
<dbReference type="PROSITE" id="PS00164">
    <property type="entry name" value="ENOLASE"/>
    <property type="match status" value="1"/>
</dbReference>
<name>ENO_FRATH</name>
<proteinExistence type="inferred from homology"/>
<protein>
    <recommendedName>
        <fullName evidence="1">Enolase</fullName>
        <ecNumber evidence="1">4.2.1.11</ecNumber>
    </recommendedName>
    <alternativeName>
        <fullName evidence="1">2-phospho-D-glycerate hydro-lyase</fullName>
    </alternativeName>
    <alternativeName>
        <fullName evidence="1">2-phosphoglycerate dehydratase</fullName>
    </alternativeName>
</protein>
<evidence type="ECO:0000255" key="1">
    <source>
        <dbReference type="HAMAP-Rule" id="MF_00318"/>
    </source>
</evidence>
<organism>
    <name type="scientific">Francisella tularensis subsp. holarctica (strain LVS)</name>
    <dbReference type="NCBI Taxonomy" id="376619"/>
    <lineage>
        <taxon>Bacteria</taxon>
        <taxon>Pseudomonadati</taxon>
        <taxon>Pseudomonadota</taxon>
        <taxon>Gammaproteobacteria</taxon>
        <taxon>Thiotrichales</taxon>
        <taxon>Francisellaceae</taxon>
        <taxon>Francisella</taxon>
    </lineage>
</organism>
<gene>
    <name evidence="1" type="primary">eno</name>
    <name type="ordered locus">FTL_1527</name>
</gene>
<sequence length="456" mass="49511">MSSQIKQVFARQILDSRGNPTVEVDVVLESGAFGRAAVPSGASTGIREALELRDGNKALFIGKSVYKAVENVNTKIAQAVKGLDALDQRLIDKTMIELDGSENKKNLGANAILGVSLATARAAASHLRKPFYRYLMDVKEYLMPVPMMNVINGGSHADNNVDMQEFMIVPAGFDTFSEALRCGTEVFHTLKKVLIADGYSVAGVGDEGGYAPDLPSNEAAIEAILKAVKEAGYEPGKHVFIALDPASSEFYKDGKYELKSENKSLTTEEMIDYYAAWVEKYPIVSIEDGLAEEDWAGWKLLTEKLGNKVQLVGDDLFVTNPSILAKGIEKGIANSILIKLNQIGTLTETFEAMAMAGQAGYTCVVSHRSGETSDTIIADLAVATCSGQIKTGSLSRSDRIAKYNQLLRIEEELGENAIYPGIKAFVFNSDEEVEEVVQEIIVEDSEAEKVVVQVEE</sequence>
<comment type="function">
    <text evidence="1">Catalyzes the reversible conversion of 2-phosphoglycerate (2-PG) into phosphoenolpyruvate (PEP). It is essential for the degradation of carbohydrates via glycolysis.</text>
</comment>
<comment type="catalytic activity">
    <reaction evidence="1">
        <text>(2R)-2-phosphoglycerate = phosphoenolpyruvate + H2O</text>
        <dbReference type="Rhea" id="RHEA:10164"/>
        <dbReference type="ChEBI" id="CHEBI:15377"/>
        <dbReference type="ChEBI" id="CHEBI:58289"/>
        <dbReference type="ChEBI" id="CHEBI:58702"/>
        <dbReference type="EC" id="4.2.1.11"/>
    </reaction>
</comment>
<comment type="cofactor">
    <cofactor evidence="1">
        <name>Mg(2+)</name>
        <dbReference type="ChEBI" id="CHEBI:18420"/>
    </cofactor>
    <text evidence="1">Binds a second Mg(2+) ion via substrate during catalysis.</text>
</comment>
<comment type="pathway">
    <text evidence="1">Carbohydrate degradation; glycolysis; pyruvate from D-glyceraldehyde 3-phosphate: step 4/5.</text>
</comment>
<comment type="subunit">
    <text evidence="1">Component of the RNA degradosome, a multiprotein complex involved in RNA processing and mRNA degradation.</text>
</comment>
<comment type="subcellular location">
    <subcellularLocation>
        <location evidence="1">Cytoplasm</location>
    </subcellularLocation>
    <subcellularLocation>
        <location evidence="1">Secreted</location>
    </subcellularLocation>
    <subcellularLocation>
        <location evidence="1">Cell surface</location>
    </subcellularLocation>
    <text evidence="1">Fractions of enolase are present in both the cytoplasm and on the cell surface.</text>
</comment>
<comment type="similarity">
    <text evidence="1">Belongs to the enolase family.</text>
</comment>
<reference key="1">
    <citation type="submission" date="2006-03" db="EMBL/GenBank/DDBJ databases">
        <title>Complete genome sequence of Francisella tularensis LVS (Live Vaccine Strain).</title>
        <authorList>
            <person name="Chain P."/>
            <person name="Larimer F."/>
            <person name="Land M."/>
            <person name="Stilwagen S."/>
            <person name="Larsson P."/>
            <person name="Bearden S."/>
            <person name="Chu M."/>
            <person name="Oyston P."/>
            <person name="Forsman M."/>
            <person name="Andersson S."/>
            <person name="Lindler L."/>
            <person name="Titball R."/>
            <person name="Garcia E."/>
        </authorList>
    </citation>
    <scope>NUCLEOTIDE SEQUENCE [LARGE SCALE GENOMIC DNA]</scope>
    <source>
        <strain>LVS</strain>
    </source>
</reference>
<accession>Q2A278</accession>